<gene>
    <name evidence="1" type="primary">obg</name>
    <name type="ordered locus">SG0366</name>
</gene>
<name>OBG_SODGM</name>
<sequence>MKFVDEATILAAAGDGGNGCVSFRREKYIPRGGPDGGDGGDGGDVWLLADENLNTLIDYRFEKNFRAERGQNGQSCDCTGKRGKDIIIKVPVGTRVLDSGTNEVMGDMTRHAQRLMVAKGGFHGLGNTRFKSSVNRAPRQKTGGTKGEIREIQLELMLLADVGMLGLPNAGKSTFIRAVSAAKPKVADYPFTTLVPSLGVVRMDNEQSFVVADIPGLIEGAADGAGLGIRFLKHLERCQVLLHLIDLAPVDESDPVENARIIVTELERYSENLASKPRWLVFNKADLLDPEEAASRANAIAKVLGWEEKYYLISAANRDGVKALCWDVMAFINAHPKEQAAPEAAPEKVEFMWDDYHRDQLQQEEAEETLDDDWDEDGVETIYQR</sequence>
<feature type="chain" id="PRO_0000386263" description="GTPase Obg">
    <location>
        <begin position="1"/>
        <end position="385"/>
    </location>
</feature>
<feature type="domain" description="Obg" evidence="2">
    <location>
        <begin position="1"/>
        <end position="159"/>
    </location>
</feature>
<feature type="domain" description="OBG-type G" evidence="1">
    <location>
        <begin position="160"/>
        <end position="333"/>
    </location>
</feature>
<feature type="region of interest" description="Disordered" evidence="3">
    <location>
        <begin position="362"/>
        <end position="385"/>
    </location>
</feature>
<feature type="compositionally biased region" description="Acidic residues" evidence="3">
    <location>
        <begin position="362"/>
        <end position="379"/>
    </location>
</feature>
<feature type="binding site" evidence="1">
    <location>
        <begin position="166"/>
        <end position="173"/>
    </location>
    <ligand>
        <name>GTP</name>
        <dbReference type="ChEBI" id="CHEBI:37565"/>
    </ligand>
</feature>
<feature type="binding site" evidence="1">
    <location>
        <position position="173"/>
    </location>
    <ligand>
        <name>Mg(2+)</name>
        <dbReference type="ChEBI" id="CHEBI:18420"/>
    </ligand>
</feature>
<feature type="binding site" evidence="1">
    <location>
        <begin position="191"/>
        <end position="195"/>
    </location>
    <ligand>
        <name>GTP</name>
        <dbReference type="ChEBI" id="CHEBI:37565"/>
    </ligand>
</feature>
<feature type="binding site" evidence="1">
    <location>
        <position position="193"/>
    </location>
    <ligand>
        <name>Mg(2+)</name>
        <dbReference type="ChEBI" id="CHEBI:18420"/>
    </ligand>
</feature>
<feature type="binding site" evidence="1">
    <location>
        <begin position="213"/>
        <end position="216"/>
    </location>
    <ligand>
        <name>GTP</name>
        <dbReference type="ChEBI" id="CHEBI:37565"/>
    </ligand>
</feature>
<feature type="binding site" evidence="1">
    <location>
        <begin position="283"/>
        <end position="286"/>
    </location>
    <ligand>
        <name>GTP</name>
        <dbReference type="ChEBI" id="CHEBI:37565"/>
    </ligand>
</feature>
<feature type="binding site" evidence="1">
    <location>
        <begin position="314"/>
        <end position="316"/>
    </location>
    <ligand>
        <name>GTP</name>
        <dbReference type="ChEBI" id="CHEBI:37565"/>
    </ligand>
</feature>
<accession>Q2NW34</accession>
<protein>
    <recommendedName>
        <fullName evidence="1">GTPase Obg</fullName>
        <ecNumber evidence="1">3.6.5.-</ecNumber>
    </recommendedName>
    <alternativeName>
        <fullName evidence="1">GTP-binding protein Obg</fullName>
    </alternativeName>
</protein>
<dbReference type="EC" id="3.6.5.-" evidence="1"/>
<dbReference type="EMBL" id="AP008232">
    <property type="protein sequence ID" value="BAE73641.1"/>
    <property type="molecule type" value="Genomic_DNA"/>
</dbReference>
<dbReference type="RefSeq" id="WP_011410229.1">
    <property type="nucleotide sequence ID" value="NC_007712.1"/>
</dbReference>
<dbReference type="SMR" id="Q2NW34"/>
<dbReference type="STRING" id="343509.SG0366"/>
<dbReference type="KEGG" id="sgl:SG0366"/>
<dbReference type="eggNOG" id="COG0536">
    <property type="taxonomic scope" value="Bacteria"/>
</dbReference>
<dbReference type="HOGENOM" id="CLU_011747_2_0_6"/>
<dbReference type="OrthoDB" id="9807318at2"/>
<dbReference type="BioCyc" id="SGLO343509:SGP1_RS03470-MONOMER"/>
<dbReference type="Proteomes" id="UP000001932">
    <property type="component" value="Chromosome"/>
</dbReference>
<dbReference type="GO" id="GO:0005737">
    <property type="term" value="C:cytoplasm"/>
    <property type="evidence" value="ECO:0007669"/>
    <property type="project" value="UniProtKB-SubCell"/>
</dbReference>
<dbReference type="GO" id="GO:0005525">
    <property type="term" value="F:GTP binding"/>
    <property type="evidence" value="ECO:0007669"/>
    <property type="project" value="UniProtKB-UniRule"/>
</dbReference>
<dbReference type="GO" id="GO:0003924">
    <property type="term" value="F:GTPase activity"/>
    <property type="evidence" value="ECO:0007669"/>
    <property type="project" value="UniProtKB-UniRule"/>
</dbReference>
<dbReference type="GO" id="GO:0000287">
    <property type="term" value="F:magnesium ion binding"/>
    <property type="evidence" value="ECO:0007669"/>
    <property type="project" value="InterPro"/>
</dbReference>
<dbReference type="GO" id="GO:0042254">
    <property type="term" value="P:ribosome biogenesis"/>
    <property type="evidence" value="ECO:0007669"/>
    <property type="project" value="UniProtKB-UniRule"/>
</dbReference>
<dbReference type="CDD" id="cd01898">
    <property type="entry name" value="Obg"/>
    <property type="match status" value="1"/>
</dbReference>
<dbReference type="FunFam" id="2.70.210.12:FF:000001">
    <property type="entry name" value="GTPase Obg"/>
    <property type="match status" value="1"/>
</dbReference>
<dbReference type="FunFam" id="3.40.50.300:FF:000185">
    <property type="entry name" value="GTPase Obg"/>
    <property type="match status" value="1"/>
</dbReference>
<dbReference type="Gene3D" id="2.70.210.12">
    <property type="entry name" value="GTP1/OBG domain"/>
    <property type="match status" value="1"/>
</dbReference>
<dbReference type="Gene3D" id="3.40.50.300">
    <property type="entry name" value="P-loop containing nucleotide triphosphate hydrolases"/>
    <property type="match status" value="1"/>
</dbReference>
<dbReference type="HAMAP" id="MF_01454">
    <property type="entry name" value="GTPase_Obg"/>
    <property type="match status" value="1"/>
</dbReference>
<dbReference type="InterPro" id="IPR031167">
    <property type="entry name" value="G_OBG"/>
</dbReference>
<dbReference type="InterPro" id="IPR006073">
    <property type="entry name" value="GTP-bd"/>
</dbReference>
<dbReference type="InterPro" id="IPR014100">
    <property type="entry name" value="GTP-bd_Obg/CgtA"/>
</dbReference>
<dbReference type="InterPro" id="IPR006074">
    <property type="entry name" value="GTP1-OBG_CS"/>
</dbReference>
<dbReference type="InterPro" id="IPR006169">
    <property type="entry name" value="GTP1_OBG_dom"/>
</dbReference>
<dbReference type="InterPro" id="IPR036726">
    <property type="entry name" value="GTP1_OBG_dom_sf"/>
</dbReference>
<dbReference type="InterPro" id="IPR045086">
    <property type="entry name" value="OBG_GTPase"/>
</dbReference>
<dbReference type="InterPro" id="IPR027417">
    <property type="entry name" value="P-loop_NTPase"/>
</dbReference>
<dbReference type="NCBIfam" id="TIGR02729">
    <property type="entry name" value="Obg_CgtA"/>
    <property type="match status" value="1"/>
</dbReference>
<dbReference type="NCBIfam" id="NF008955">
    <property type="entry name" value="PRK12297.1"/>
    <property type="match status" value="1"/>
</dbReference>
<dbReference type="NCBIfam" id="NF008956">
    <property type="entry name" value="PRK12299.1"/>
    <property type="match status" value="1"/>
</dbReference>
<dbReference type="PANTHER" id="PTHR11702">
    <property type="entry name" value="DEVELOPMENTALLY REGULATED GTP-BINDING PROTEIN-RELATED"/>
    <property type="match status" value="1"/>
</dbReference>
<dbReference type="PANTHER" id="PTHR11702:SF31">
    <property type="entry name" value="MITOCHONDRIAL RIBOSOME-ASSOCIATED GTPASE 2"/>
    <property type="match status" value="1"/>
</dbReference>
<dbReference type="Pfam" id="PF01018">
    <property type="entry name" value="GTP1_OBG"/>
    <property type="match status" value="1"/>
</dbReference>
<dbReference type="Pfam" id="PF01926">
    <property type="entry name" value="MMR_HSR1"/>
    <property type="match status" value="1"/>
</dbReference>
<dbReference type="PIRSF" id="PIRSF002401">
    <property type="entry name" value="GTP_bd_Obg/CgtA"/>
    <property type="match status" value="1"/>
</dbReference>
<dbReference type="PRINTS" id="PR00326">
    <property type="entry name" value="GTP1OBG"/>
</dbReference>
<dbReference type="SUPFAM" id="SSF82051">
    <property type="entry name" value="Obg GTP-binding protein N-terminal domain"/>
    <property type="match status" value="1"/>
</dbReference>
<dbReference type="SUPFAM" id="SSF52540">
    <property type="entry name" value="P-loop containing nucleoside triphosphate hydrolases"/>
    <property type="match status" value="1"/>
</dbReference>
<dbReference type="PROSITE" id="PS51710">
    <property type="entry name" value="G_OBG"/>
    <property type="match status" value="1"/>
</dbReference>
<dbReference type="PROSITE" id="PS00905">
    <property type="entry name" value="GTP1_OBG"/>
    <property type="match status" value="1"/>
</dbReference>
<dbReference type="PROSITE" id="PS51883">
    <property type="entry name" value="OBG"/>
    <property type="match status" value="1"/>
</dbReference>
<comment type="function">
    <text evidence="1">An essential GTPase which binds GTP, GDP and possibly (p)ppGpp with moderate affinity, with high nucleotide exchange rates and a fairly low GTP hydrolysis rate. Plays a role in control of the cell cycle, stress response, ribosome biogenesis and in those bacteria that undergo differentiation, in morphogenesis control.</text>
</comment>
<comment type="cofactor">
    <cofactor evidence="1">
        <name>Mg(2+)</name>
        <dbReference type="ChEBI" id="CHEBI:18420"/>
    </cofactor>
</comment>
<comment type="subunit">
    <text evidence="1">Monomer.</text>
</comment>
<comment type="subcellular location">
    <subcellularLocation>
        <location evidence="1">Cytoplasm</location>
    </subcellularLocation>
</comment>
<comment type="similarity">
    <text evidence="1">Belongs to the TRAFAC class OBG-HflX-like GTPase superfamily. OBG GTPase family.</text>
</comment>
<proteinExistence type="inferred from homology"/>
<organism>
    <name type="scientific">Sodalis glossinidius (strain morsitans)</name>
    <dbReference type="NCBI Taxonomy" id="343509"/>
    <lineage>
        <taxon>Bacteria</taxon>
        <taxon>Pseudomonadati</taxon>
        <taxon>Pseudomonadota</taxon>
        <taxon>Gammaproteobacteria</taxon>
        <taxon>Enterobacterales</taxon>
        <taxon>Bruguierivoracaceae</taxon>
        <taxon>Sodalis</taxon>
    </lineage>
</organism>
<keyword id="KW-0963">Cytoplasm</keyword>
<keyword id="KW-0342">GTP-binding</keyword>
<keyword id="KW-0378">Hydrolase</keyword>
<keyword id="KW-0460">Magnesium</keyword>
<keyword id="KW-0479">Metal-binding</keyword>
<keyword id="KW-0547">Nucleotide-binding</keyword>
<reference key="1">
    <citation type="journal article" date="2006" name="Genome Res.">
        <title>Massive genome erosion and functional adaptations provide insights into the symbiotic lifestyle of Sodalis glossinidius in the tsetse host.</title>
        <authorList>
            <person name="Toh H."/>
            <person name="Weiss B.L."/>
            <person name="Perkin S.A.H."/>
            <person name="Yamashita A."/>
            <person name="Oshima K."/>
            <person name="Hattori M."/>
            <person name="Aksoy S."/>
        </authorList>
    </citation>
    <scope>NUCLEOTIDE SEQUENCE [LARGE SCALE GENOMIC DNA]</scope>
    <source>
        <strain>morsitans</strain>
    </source>
</reference>
<evidence type="ECO:0000255" key="1">
    <source>
        <dbReference type="HAMAP-Rule" id="MF_01454"/>
    </source>
</evidence>
<evidence type="ECO:0000255" key="2">
    <source>
        <dbReference type="PROSITE-ProRule" id="PRU01231"/>
    </source>
</evidence>
<evidence type="ECO:0000256" key="3">
    <source>
        <dbReference type="SAM" id="MobiDB-lite"/>
    </source>
</evidence>